<feature type="chain" id="PRO_0000089668" description="Protein Churchill">
    <location>
        <begin position="1"/>
        <end position="112"/>
    </location>
</feature>
<feature type="binding site" evidence="1">
    <location>
        <position position="2"/>
    </location>
    <ligand>
        <name>Zn(2+)</name>
        <dbReference type="ChEBI" id="CHEBI:29105"/>
        <label>1</label>
    </ligand>
</feature>
<feature type="binding site" evidence="1">
    <location>
        <position position="5"/>
    </location>
    <ligand>
        <name>Zn(2+)</name>
        <dbReference type="ChEBI" id="CHEBI:29105"/>
        <label>1</label>
    </ligand>
</feature>
<feature type="binding site" evidence="1">
    <location>
        <position position="30"/>
    </location>
    <ligand>
        <name>Zn(2+)</name>
        <dbReference type="ChEBI" id="CHEBI:29105"/>
        <label>1</label>
    </ligand>
</feature>
<feature type="binding site" evidence="1">
    <location>
        <position position="30"/>
    </location>
    <ligand>
        <name>Zn(2+)</name>
        <dbReference type="ChEBI" id="CHEBI:29105"/>
        <label>2</label>
    </ligand>
</feature>
<feature type="binding site" evidence="1">
    <location>
        <position position="33"/>
    </location>
    <ligand>
        <name>Zn(2+)</name>
        <dbReference type="ChEBI" id="CHEBI:29105"/>
        <label>2</label>
    </ligand>
</feature>
<feature type="binding site" evidence="1">
    <location>
        <position position="59"/>
    </location>
    <ligand>
        <name>Zn(2+)</name>
        <dbReference type="ChEBI" id="CHEBI:29105"/>
        <label>3</label>
    </ligand>
</feature>
<feature type="binding site" evidence="1">
    <location>
        <position position="61"/>
    </location>
    <ligand>
        <name>Zn(2+)</name>
        <dbReference type="ChEBI" id="CHEBI:29105"/>
        <label>2</label>
    </ligand>
</feature>
<feature type="binding site" evidence="1">
    <location>
        <position position="64"/>
    </location>
    <ligand>
        <name>Zn(2+)</name>
        <dbReference type="ChEBI" id="CHEBI:29105"/>
        <label>2</label>
    </ligand>
</feature>
<feature type="binding site" evidence="1">
    <location>
        <position position="66"/>
    </location>
    <ligand>
        <name>Zn(2+)</name>
        <dbReference type="ChEBI" id="CHEBI:29105"/>
        <label>1</label>
    </ligand>
</feature>
<feature type="binding site" evidence="1">
    <location>
        <position position="71"/>
    </location>
    <ligand>
        <name>Zn(2+)</name>
        <dbReference type="ChEBI" id="CHEBI:29105"/>
        <label>3</label>
    </ligand>
</feature>
<feature type="binding site" evidence="1">
    <location>
        <position position="88"/>
    </location>
    <ligand>
        <name>Zn(2+)</name>
        <dbReference type="ChEBI" id="CHEBI:29105"/>
        <label>3</label>
    </ligand>
</feature>
<feature type="binding site" evidence="1">
    <location>
        <position position="91"/>
    </location>
    <ligand>
        <name>Zn(2+)</name>
        <dbReference type="ChEBI" id="CHEBI:29105"/>
        <label>3</label>
    </ligand>
</feature>
<organism>
    <name type="scientific">Xenopus laevis</name>
    <name type="common">African clawed frog</name>
    <dbReference type="NCBI Taxonomy" id="8355"/>
    <lineage>
        <taxon>Eukaryota</taxon>
        <taxon>Metazoa</taxon>
        <taxon>Chordata</taxon>
        <taxon>Craniata</taxon>
        <taxon>Vertebrata</taxon>
        <taxon>Euteleostomi</taxon>
        <taxon>Amphibia</taxon>
        <taxon>Batrachia</taxon>
        <taxon>Anura</taxon>
        <taxon>Pipoidea</taxon>
        <taxon>Pipidae</taxon>
        <taxon>Xenopodinae</taxon>
        <taxon>Xenopus</taxon>
        <taxon>Xenopus</taxon>
    </lineage>
</organism>
<accession>Q9DFZ4</accession>
<accession>Q0IHD2</accession>
<gene>
    <name type="primary">churc1</name>
    <name type="synonym">chch</name>
</gene>
<name>CHUR_XENLA</name>
<evidence type="ECO:0000250" key="1"/>
<evidence type="ECO:0000250" key="2">
    <source>
        <dbReference type="UniProtKB" id="Q5U3N7"/>
    </source>
</evidence>
<evidence type="ECO:0000250" key="3">
    <source>
        <dbReference type="UniProtKB" id="Q8WUH1"/>
    </source>
</evidence>
<evidence type="ECO:0000250" key="4">
    <source>
        <dbReference type="UniProtKB" id="Q9DFZ3"/>
    </source>
</evidence>
<evidence type="ECO:0000305" key="5"/>
<sequence>MCGGCVQQEYPDRGSTCLETGSYLLNYVSCVQCNKRDFVLIVNKTAAEEDGEEIITYDHMCKNCHHVIAKHEYTFSVVDDYQEYTMLCMLCGRAEDSVSVLPDDPRQMAPLF</sequence>
<dbReference type="EMBL" id="AF238862">
    <property type="protein sequence ID" value="AAG09759.1"/>
    <property type="molecule type" value="mRNA"/>
</dbReference>
<dbReference type="EMBL" id="BC123207">
    <property type="protein sequence ID" value="AAI23208.1"/>
    <property type="molecule type" value="mRNA"/>
</dbReference>
<dbReference type="RefSeq" id="NP_001079208.1">
    <property type="nucleotide sequence ID" value="NM_001085739.1"/>
</dbReference>
<dbReference type="SMR" id="Q9DFZ4"/>
<dbReference type="DNASU" id="373819"/>
<dbReference type="GeneID" id="373819"/>
<dbReference type="KEGG" id="xla:373819"/>
<dbReference type="AGR" id="Xenbase:XB-GENE-6252415"/>
<dbReference type="CTD" id="373819"/>
<dbReference type="Xenbase" id="XB-GENE-6252415">
    <property type="gene designation" value="churc1.S"/>
</dbReference>
<dbReference type="OMA" id="ASHEYTF"/>
<dbReference type="OrthoDB" id="5954706at2759"/>
<dbReference type="Proteomes" id="UP000186698">
    <property type="component" value="Chromosome 8S"/>
</dbReference>
<dbReference type="Bgee" id="373819">
    <property type="expression patterns" value="Expressed in internal ear and 19 other cell types or tissues"/>
</dbReference>
<dbReference type="GO" id="GO:0008270">
    <property type="term" value="F:zinc ion binding"/>
    <property type="evidence" value="ECO:0007669"/>
    <property type="project" value="InterPro"/>
</dbReference>
<dbReference type="GO" id="GO:0008543">
    <property type="term" value="P:fibroblast growth factor receptor signaling pathway"/>
    <property type="evidence" value="ECO:0000318"/>
    <property type="project" value="GO_Central"/>
</dbReference>
<dbReference type="GO" id="GO:0045893">
    <property type="term" value="P:positive regulation of DNA-templated transcription"/>
    <property type="evidence" value="ECO:0007669"/>
    <property type="project" value="InterPro"/>
</dbReference>
<dbReference type="Gene3D" id="2.60.40.4240">
    <property type="entry name" value="Transcription activator, Churchill"/>
    <property type="match status" value="1"/>
</dbReference>
<dbReference type="InterPro" id="IPR038543">
    <property type="entry name" value="Churchill_sf"/>
</dbReference>
<dbReference type="InterPro" id="IPR009508">
    <property type="entry name" value="Transcrpt_activator_Churchill"/>
</dbReference>
<dbReference type="PANTHER" id="PTHR31931">
    <property type="entry name" value="PROTEIN CHURCHILL"/>
    <property type="match status" value="1"/>
</dbReference>
<dbReference type="PANTHER" id="PTHR31931:SF2">
    <property type="entry name" value="PROTEIN CHURCHILL"/>
    <property type="match status" value="1"/>
</dbReference>
<dbReference type="Pfam" id="PF06573">
    <property type="entry name" value="Churchill"/>
    <property type="match status" value="1"/>
</dbReference>
<comment type="function">
    <text evidence="2 3 4">Transcriptional activator that mediates FGF signaling during neural development (By similarity). Plays a role in the regulation of cell movement (By similarity). Does not bind DNA by itself (By similarity).</text>
</comment>
<comment type="similarity">
    <text evidence="5">Belongs to the Churchill family.</text>
</comment>
<reference key="1">
    <citation type="journal article" date="2003" name="Cell">
        <title>Churchill, a zinc finger transcriptional activator, regulates the transition between gastrulation and neurulation.</title>
        <authorList>
            <person name="Sheng G."/>
            <person name="dos Reis M."/>
            <person name="Stern C.D."/>
        </authorList>
    </citation>
    <scope>NUCLEOTIDE SEQUENCE [MRNA]</scope>
</reference>
<reference key="2">
    <citation type="submission" date="2006-09" db="EMBL/GenBank/DDBJ databases">
        <authorList>
            <consortium name="NIH - Xenopus Gene Collection (XGC) project"/>
        </authorList>
    </citation>
    <scope>NUCLEOTIDE SEQUENCE [LARGE SCALE MRNA]</scope>
    <source>
        <tissue>Fat body</tissue>
    </source>
</reference>
<proteinExistence type="inferred from homology"/>
<keyword id="KW-0010">Activator</keyword>
<keyword id="KW-0217">Developmental protein</keyword>
<keyword id="KW-0479">Metal-binding</keyword>
<keyword id="KW-1185">Reference proteome</keyword>
<keyword id="KW-0804">Transcription</keyword>
<keyword id="KW-0805">Transcription regulation</keyword>
<keyword id="KW-0862">Zinc</keyword>
<protein>
    <recommendedName>
        <fullName>Protein Churchill</fullName>
    </recommendedName>
</protein>